<reference key="1">
    <citation type="submission" date="2007-08" db="EMBL/GenBank/DDBJ databases">
        <authorList>
            <consortium name="The Citrobacter koseri Genome Sequencing Project"/>
            <person name="McClelland M."/>
            <person name="Sanderson E.K."/>
            <person name="Porwollik S."/>
            <person name="Spieth J."/>
            <person name="Clifton W.S."/>
            <person name="Latreille P."/>
            <person name="Courtney L."/>
            <person name="Wang C."/>
            <person name="Pepin K."/>
            <person name="Bhonagiri V."/>
            <person name="Nash W."/>
            <person name="Johnson M."/>
            <person name="Thiruvilangam P."/>
            <person name="Wilson R."/>
        </authorList>
    </citation>
    <scope>NUCLEOTIDE SEQUENCE [LARGE SCALE GENOMIC DNA]</scope>
    <source>
        <strain>ATCC BAA-895 / CDC 4225-83 / SGSC4696</strain>
    </source>
</reference>
<keyword id="KW-1185">Reference proteome</keyword>
<gene>
    <name evidence="1" type="primary">nrdI</name>
    <name type="ordered locus">CKO_04023</name>
</gene>
<comment type="function">
    <text evidence="1">Probably involved in ribonucleotide reductase function.</text>
</comment>
<comment type="similarity">
    <text evidence="1">Belongs to the NrdI family.</text>
</comment>
<name>NRDI_CITK8</name>
<dbReference type="EMBL" id="CP000822">
    <property type="protein sequence ID" value="ABV15095.1"/>
    <property type="molecule type" value="Genomic_DNA"/>
</dbReference>
<dbReference type="RefSeq" id="WP_012134787.1">
    <property type="nucleotide sequence ID" value="NC_009792.1"/>
</dbReference>
<dbReference type="SMR" id="A8ANN2"/>
<dbReference type="STRING" id="290338.CKO_04023"/>
<dbReference type="GeneID" id="45137668"/>
<dbReference type="KEGG" id="cko:CKO_04023"/>
<dbReference type="HOGENOM" id="CLU_114845_0_0_6"/>
<dbReference type="OrthoDB" id="350535at2"/>
<dbReference type="Proteomes" id="UP000008148">
    <property type="component" value="Chromosome"/>
</dbReference>
<dbReference type="GO" id="GO:0010181">
    <property type="term" value="F:FMN binding"/>
    <property type="evidence" value="ECO:0007669"/>
    <property type="project" value="InterPro"/>
</dbReference>
<dbReference type="GO" id="GO:0036211">
    <property type="term" value="P:protein modification process"/>
    <property type="evidence" value="ECO:0007669"/>
    <property type="project" value="InterPro"/>
</dbReference>
<dbReference type="FunFam" id="3.40.50.360:FF:000005">
    <property type="entry name" value="Protein NrdI"/>
    <property type="match status" value="1"/>
</dbReference>
<dbReference type="Gene3D" id="3.40.50.360">
    <property type="match status" value="1"/>
</dbReference>
<dbReference type="HAMAP" id="MF_00128">
    <property type="entry name" value="NrdI"/>
    <property type="match status" value="1"/>
</dbReference>
<dbReference type="InterPro" id="IPR029039">
    <property type="entry name" value="Flavoprotein-like_sf"/>
</dbReference>
<dbReference type="InterPro" id="IPR020852">
    <property type="entry name" value="RNR_Ib_NrdI_bac"/>
</dbReference>
<dbReference type="InterPro" id="IPR004465">
    <property type="entry name" value="RNR_NrdI"/>
</dbReference>
<dbReference type="NCBIfam" id="TIGR00333">
    <property type="entry name" value="nrdI"/>
    <property type="match status" value="1"/>
</dbReference>
<dbReference type="PANTHER" id="PTHR37297">
    <property type="entry name" value="PROTEIN NRDI"/>
    <property type="match status" value="1"/>
</dbReference>
<dbReference type="PANTHER" id="PTHR37297:SF1">
    <property type="entry name" value="PROTEIN NRDI"/>
    <property type="match status" value="1"/>
</dbReference>
<dbReference type="Pfam" id="PF07972">
    <property type="entry name" value="Flavodoxin_NdrI"/>
    <property type="match status" value="1"/>
</dbReference>
<dbReference type="PIRSF" id="PIRSF005087">
    <property type="entry name" value="NrdI"/>
    <property type="match status" value="1"/>
</dbReference>
<dbReference type="SUPFAM" id="SSF52218">
    <property type="entry name" value="Flavoproteins"/>
    <property type="match status" value="1"/>
</dbReference>
<protein>
    <recommendedName>
        <fullName evidence="1">Protein NrdI</fullName>
    </recommendedName>
</protein>
<feature type="chain" id="PRO_1000016497" description="Protein NrdI">
    <location>
        <begin position="1"/>
        <end position="136"/>
    </location>
</feature>
<accession>A8ANN2</accession>
<sequence length="136" mass="15396">MSQLVYFSSSSENTHRFMQRLGLPAIRIPLNERERIRVDEPYILVVPSYGGGGTAGAVPRQVIRFLNDEHNRALIRGVIASGNRNFGEAYGRAGEVISQKCGVPWLYRFELMGTQSDIDNVRKGVSEFWQRQPQNV</sequence>
<evidence type="ECO:0000255" key="1">
    <source>
        <dbReference type="HAMAP-Rule" id="MF_00128"/>
    </source>
</evidence>
<organism>
    <name type="scientific">Citrobacter koseri (strain ATCC BAA-895 / CDC 4225-83 / SGSC4696)</name>
    <dbReference type="NCBI Taxonomy" id="290338"/>
    <lineage>
        <taxon>Bacteria</taxon>
        <taxon>Pseudomonadati</taxon>
        <taxon>Pseudomonadota</taxon>
        <taxon>Gammaproteobacteria</taxon>
        <taxon>Enterobacterales</taxon>
        <taxon>Enterobacteriaceae</taxon>
        <taxon>Citrobacter</taxon>
    </lineage>
</organism>
<proteinExistence type="inferred from homology"/>